<organism>
    <name type="scientific">Mycoplasma genitalium (strain ATCC 33530 / DSM 19775 / NCTC 10195 / G37)</name>
    <name type="common">Mycoplasmoides genitalium</name>
    <dbReference type="NCBI Taxonomy" id="243273"/>
    <lineage>
        <taxon>Bacteria</taxon>
        <taxon>Bacillati</taxon>
        <taxon>Mycoplasmatota</taxon>
        <taxon>Mycoplasmoidales</taxon>
        <taxon>Mycoplasmoidaceae</taxon>
        <taxon>Mycoplasmoides</taxon>
    </lineage>
</organism>
<evidence type="ECO:0000269" key="1">
    <source>
    </source>
</evidence>
<evidence type="ECO:0000269" key="2">
    <source>
    </source>
</evidence>
<evidence type="ECO:0000269" key="3">
    <source>
    </source>
</evidence>
<evidence type="ECO:0000303" key="4">
    <source>
    </source>
</evidence>
<evidence type="ECO:0000305" key="5"/>
<evidence type="ECO:0000305" key="6">
    <source>
    </source>
</evidence>
<evidence type="ECO:0007744" key="7">
    <source>
        <dbReference type="PDB" id="1YDX"/>
    </source>
</evidence>
<evidence type="ECO:0007829" key="8">
    <source>
        <dbReference type="PDB" id="1YDX"/>
    </source>
</evidence>
<comment type="function">
    <text evidence="3 4">The specificity (S) subunit of a type I restriction enzyme; this subunit dictates DNA sequence specificity. This bacterium does not encode the associated endonuclease or methylase subunits.</text>
</comment>
<comment type="domain">
    <text evidence="1 6">Contains two target DNA recognition domains (TRD), each specifying recognition of one of the two defined components of the target sequence (Probable). The TDRs show high structural similarity and each forms a globular structure. The two TDRs are separated by 2 long, conserved antiparallel helices that form a coiled coil structure (PubMed:16038930).</text>
</comment>
<comment type="disruption phenotype">
    <text evidence="2">Not essential, it can be deleted.</text>
</comment>
<comment type="similarity">
    <text evidence="5">Belongs to the type-I restriction system S methylase family.</text>
</comment>
<keyword id="KW-0002">3D-structure</keyword>
<keyword id="KW-0175">Coiled coil</keyword>
<keyword id="KW-0238">DNA-binding</keyword>
<keyword id="KW-1185">Reference proteome</keyword>
<keyword id="KW-0680">Restriction system</keyword>
<name>T1SX_MYCGE</name>
<reference key="1">
    <citation type="journal article" date="1995" name="Science">
        <title>The minimal gene complement of Mycoplasma genitalium.</title>
        <authorList>
            <person name="Fraser C.M."/>
            <person name="Gocayne J.D."/>
            <person name="White O."/>
            <person name="Adams M.D."/>
            <person name="Clayton R.A."/>
            <person name="Fleischmann R.D."/>
            <person name="Bult C.J."/>
            <person name="Kerlavage A.R."/>
            <person name="Sutton G.G."/>
            <person name="Kelley J.M."/>
            <person name="Fritchman J.L."/>
            <person name="Weidman J.F."/>
            <person name="Small K.V."/>
            <person name="Sandusky M."/>
            <person name="Fuhrmann J.L."/>
            <person name="Nguyen D.T."/>
            <person name="Utterback T.R."/>
            <person name="Saudek D.M."/>
            <person name="Phillips C.A."/>
            <person name="Merrick J.M."/>
            <person name="Tomb J.-F."/>
            <person name="Dougherty B.A."/>
            <person name="Bott K.F."/>
            <person name="Hu P.-C."/>
            <person name="Lucier T.S."/>
            <person name="Peterson S.N."/>
            <person name="Smith H.O."/>
            <person name="Hutchison C.A. III"/>
            <person name="Venter J.C."/>
        </authorList>
    </citation>
    <scope>NUCLEOTIDE SEQUENCE [LARGE SCALE GENOMIC DNA]</scope>
    <source>
        <strain>ATCC 33530 / DSM 19775 / NCTC 10195 / G37</strain>
    </source>
</reference>
<reference key="2">
    <citation type="journal article" date="2003" name="Nucleic Acids Res.">
        <title>A nomenclature for restriction enzymes, DNA methyltransferases, homing endonucleases and their genes.</title>
        <authorList>
            <person name="Roberts R.J."/>
            <person name="Belfort M."/>
            <person name="Bestor T."/>
            <person name="Bhagwat A.S."/>
            <person name="Bickle T.A."/>
            <person name="Bitinaite J."/>
            <person name="Blumenthal R.M."/>
            <person name="Degtyarev S.K."/>
            <person name="Dryden D.T."/>
            <person name="Dybvig K."/>
            <person name="Firman K."/>
            <person name="Gromova E.S."/>
            <person name="Gumport R.I."/>
            <person name="Halford S.E."/>
            <person name="Hattman S."/>
            <person name="Heitman J."/>
            <person name="Hornby D.P."/>
            <person name="Janulaitis A."/>
            <person name="Jeltsch A."/>
            <person name="Josephsen J."/>
            <person name="Kiss A."/>
            <person name="Klaenhammer T.R."/>
            <person name="Kobayashi I."/>
            <person name="Kong H."/>
            <person name="Krueger D.H."/>
            <person name="Lacks S."/>
            <person name="Marinus M.G."/>
            <person name="Miyahara M."/>
            <person name="Morgan R.D."/>
            <person name="Murray N.E."/>
            <person name="Nagaraja V."/>
            <person name="Piekarowicz A."/>
            <person name="Pingoud A."/>
            <person name="Raleigh E."/>
            <person name="Rao D.N."/>
            <person name="Reich N."/>
            <person name="Repin V.E."/>
            <person name="Selker E.U."/>
            <person name="Shaw P.C."/>
            <person name="Stein D.C."/>
            <person name="Stoddard B.L."/>
            <person name="Szybalski W."/>
            <person name="Trautner T.A."/>
            <person name="Van Etten J.L."/>
            <person name="Vitor J.M."/>
            <person name="Wilson G.G."/>
            <person name="Xu S.Y."/>
        </authorList>
    </citation>
    <scope>NOMENCLATURE</scope>
</reference>
<reference key="3">
    <citation type="journal article" date="2006" name="Proc. Natl. Acad. Sci. U.S.A.">
        <title>Essential genes of a minimal bacterium.</title>
        <authorList>
            <person name="Glass J.I."/>
            <person name="Assad-Garcia N."/>
            <person name="Alperovich N."/>
            <person name="Yooseph S."/>
            <person name="Lewis M.R."/>
            <person name="Maruf M."/>
            <person name="Hutchison C.A. III"/>
            <person name="Smith H.O."/>
            <person name="Venter J.C."/>
        </authorList>
    </citation>
    <scope>DISRUPTION PHENOTYPE</scope>
</reference>
<reference evidence="7" key="4">
    <citation type="journal article" date="2005" name="J. Mol. Biol.">
        <title>Crystal structure of a putative type I restriction-modification S subunit from Mycoplasma genitalium.</title>
        <authorList>
            <person name="Calisto B.M."/>
            <person name="Pich O.Q."/>
            <person name="Pinol J."/>
            <person name="Fita I."/>
            <person name="Querol E."/>
            <person name="Carpena X."/>
        </authorList>
    </citation>
    <scope>X-RAY CRYSTALLOGRAPHY (2.30 ANGSTROMS)</scope>
    <scope>DOMAIN</scope>
</reference>
<protein>
    <recommendedName>
        <fullName evidence="4">Putative type I specificity subunit S.MgeORF438P</fullName>
        <shortName>S protein</shortName>
        <shortName evidence="4">S.MgeORF438P</shortName>
    </recommendedName>
    <alternativeName>
        <fullName>Putative type-1 restriction enzyme specificity subunit MG438</fullName>
    </alternativeName>
</protein>
<gene>
    <name type="ordered locus">MG438</name>
</gene>
<proteinExistence type="evidence at protein level"/>
<accession>Q49434</accession>
<feature type="chain" id="PRO_0000198042" description="Putative type I specificity subunit S.MgeORF438P">
    <location>
        <begin position="1"/>
        <end position="383"/>
    </location>
</feature>
<feature type="region of interest" description="TRD1" evidence="1">
    <location>
        <begin position="1"/>
        <end position="142"/>
    </location>
</feature>
<feature type="region of interest" description="Conserved region 1" evidence="1">
    <location>
        <begin position="143"/>
        <end position="182"/>
    </location>
</feature>
<feature type="region of interest" description="TRD2" evidence="1">
    <location>
        <begin position="183"/>
        <end position="330"/>
    </location>
</feature>
<feature type="region of interest" description="Conserved region 2" evidence="1">
    <location>
        <begin position="331"/>
        <end position="370"/>
    </location>
</feature>
<feature type="coiled-coil region" evidence="1 7">
    <location>
        <begin position="143"/>
        <end position="182"/>
    </location>
</feature>
<feature type="coiled-coil region" evidence="1 7">
    <location>
        <begin position="331"/>
        <end position="370"/>
    </location>
</feature>
<feature type="strand" evidence="8">
    <location>
        <begin position="7"/>
        <end position="10"/>
    </location>
</feature>
<feature type="strand" evidence="8">
    <location>
        <begin position="14"/>
        <end position="17"/>
    </location>
</feature>
<feature type="helix" evidence="8">
    <location>
        <begin position="18"/>
        <end position="21"/>
    </location>
</feature>
<feature type="strand" evidence="8">
    <location>
        <begin position="22"/>
        <end position="26"/>
    </location>
</feature>
<feature type="helix" evidence="8">
    <location>
        <begin position="32"/>
        <end position="34"/>
    </location>
</feature>
<feature type="strand" evidence="8">
    <location>
        <begin position="40"/>
        <end position="49"/>
    </location>
</feature>
<feature type="strand" evidence="8">
    <location>
        <begin position="53"/>
        <end position="55"/>
    </location>
</feature>
<feature type="strand" evidence="8">
    <location>
        <begin position="64"/>
        <end position="67"/>
    </location>
</feature>
<feature type="strand" evidence="8">
    <location>
        <begin position="69"/>
        <end position="71"/>
    </location>
</feature>
<feature type="strand" evidence="8">
    <location>
        <begin position="75"/>
        <end position="77"/>
    </location>
</feature>
<feature type="strand" evidence="8">
    <location>
        <begin position="82"/>
        <end position="84"/>
    </location>
</feature>
<feature type="strand" evidence="8">
    <location>
        <begin position="88"/>
        <end position="94"/>
    </location>
</feature>
<feature type="turn" evidence="8">
    <location>
        <begin position="96"/>
        <end position="98"/>
    </location>
</feature>
<feature type="helix" evidence="8">
    <location>
        <begin position="101"/>
        <end position="109"/>
    </location>
</feature>
<feature type="helix" evidence="8">
    <location>
        <begin position="112"/>
        <end position="116"/>
    </location>
</feature>
<feature type="strand" evidence="8">
    <location>
        <begin position="122"/>
        <end position="124"/>
    </location>
</feature>
<feature type="helix" evidence="8">
    <location>
        <begin position="129"/>
        <end position="134"/>
    </location>
</feature>
<feature type="strand" evidence="8">
    <location>
        <begin position="136"/>
        <end position="139"/>
    </location>
</feature>
<feature type="helix" evidence="8">
    <location>
        <begin position="143"/>
        <end position="182"/>
    </location>
</feature>
<feature type="helix" evidence="8">
    <location>
        <begin position="186"/>
        <end position="191"/>
    </location>
</feature>
<feature type="helix" evidence="8">
    <location>
        <begin position="196"/>
        <end position="200"/>
    </location>
</feature>
<feature type="strand" evidence="8">
    <location>
        <begin position="202"/>
        <end position="205"/>
    </location>
</feature>
<feature type="helix" evidence="8">
    <location>
        <begin position="206"/>
        <end position="208"/>
    </location>
</feature>
<feature type="strand" evidence="8">
    <location>
        <begin position="210"/>
        <end position="214"/>
    </location>
</feature>
<feature type="helix" evidence="8">
    <location>
        <begin position="220"/>
        <end position="222"/>
    </location>
</feature>
<feature type="strand" evidence="8">
    <location>
        <begin position="224"/>
        <end position="226"/>
    </location>
</feature>
<feature type="strand" evidence="8">
    <location>
        <begin position="228"/>
        <end position="237"/>
    </location>
</feature>
<feature type="strand" evidence="8">
    <location>
        <begin position="239"/>
        <end position="244"/>
    </location>
</feature>
<feature type="strand" evidence="8">
    <location>
        <begin position="249"/>
        <end position="255"/>
    </location>
</feature>
<feature type="turn" evidence="8">
    <location>
        <begin position="259"/>
        <end position="262"/>
    </location>
</feature>
<feature type="strand" evidence="8">
    <location>
        <begin position="264"/>
        <end position="269"/>
    </location>
</feature>
<feature type="strand" evidence="8">
    <location>
        <begin position="271"/>
        <end position="273"/>
    </location>
</feature>
<feature type="strand" evidence="8">
    <location>
        <begin position="277"/>
        <end position="284"/>
    </location>
</feature>
<feature type="helix" evidence="8">
    <location>
        <begin position="289"/>
        <end position="310"/>
    </location>
</feature>
<feature type="helix" evidence="8">
    <location>
        <begin position="317"/>
        <end position="321"/>
    </location>
</feature>
<feature type="strand" evidence="8">
    <location>
        <begin position="324"/>
        <end position="327"/>
    </location>
</feature>
<feature type="helix" evidence="8">
    <location>
        <begin position="331"/>
        <end position="369"/>
    </location>
</feature>
<dbReference type="EMBL" id="L43967">
    <property type="protein sequence ID" value="AAC72457.1"/>
    <property type="molecule type" value="Genomic_DNA"/>
</dbReference>
<dbReference type="PIR" id="D64248">
    <property type="entry name" value="D64248"/>
</dbReference>
<dbReference type="RefSeq" id="WP_009885596.1">
    <property type="nucleotide sequence ID" value="NC_000908.2"/>
</dbReference>
<dbReference type="PDB" id="1YDX">
    <property type="method" value="X-ray"/>
    <property type="resolution" value="2.30 A"/>
    <property type="chains" value="A=1-383"/>
</dbReference>
<dbReference type="PDBsum" id="1YDX"/>
<dbReference type="SMR" id="Q49434"/>
<dbReference type="STRING" id="243273.MG_438"/>
<dbReference type="REBASE" id="3674">
    <property type="entry name" value="S.MgeORF438P"/>
</dbReference>
<dbReference type="GeneID" id="88282618"/>
<dbReference type="KEGG" id="mge:MG_438"/>
<dbReference type="eggNOG" id="COG0732">
    <property type="taxonomic scope" value="Bacteria"/>
</dbReference>
<dbReference type="HOGENOM" id="CLU_721242_0_0_14"/>
<dbReference type="InParanoid" id="Q49434"/>
<dbReference type="OrthoDB" id="396674at2"/>
<dbReference type="BioCyc" id="MGEN243273:G1GJ2-531-MONOMER"/>
<dbReference type="EvolutionaryTrace" id="Q49434"/>
<dbReference type="PRO" id="PR:Q49434"/>
<dbReference type="Proteomes" id="UP000000807">
    <property type="component" value="Chromosome"/>
</dbReference>
<dbReference type="GO" id="GO:0003677">
    <property type="term" value="F:DNA binding"/>
    <property type="evidence" value="ECO:0007669"/>
    <property type="project" value="UniProtKB-KW"/>
</dbReference>
<dbReference type="GO" id="GO:0009307">
    <property type="term" value="P:DNA restriction-modification system"/>
    <property type="evidence" value="ECO:0007669"/>
    <property type="project" value="UniProtKB-KW"/>
</dbReference>
<dbReference type="CDD" id="cd17291">
    <property type="entry name" value="RMtype1_S_MgeORF438P-TRD-CR_like"/>
    <property type="match status" value="2"/>
</dbReference>
<dbReference type="Gene3D" id="1.10.287.1120">
    <property type="entry name" value="Bipartite methylase S protein"/>
    <property type="match status" value="1"/>
</dbReference>
<dbReference type="Gene3D" id="3.90.220.20">
    <property type="entry name" value="DNA methylase specificity domains"/>
    <property type="match status" value="2"/>
</dbReference>
<dbReference type="InterPro" id="IPR000055">
    <property type="entry name" value="Restrct_endonuc_typeI_TRD"/>
</dbReference>
<dbReference type="InterPro" id="IPR044946">
    <property type="entry name" value="Restrct_endonuc_typeI_TRD_sf"/>
</dbReference>
<dbReference type="InterPro" id="IPR052021">
    <property type="entry name" value="Type-I_RS_S_subunit"/>
</dbReference>
<dbReference type="PANTHER" id="PTHR30408:SF13">
    <property type="entry name" value="TYPE I RESTRICTION ENZYME HINDI SPECIFICITY SUBUNIT"/>
    <property type="match status" value="1"/>
</dbReference>
<dbReference type="PANTHER" id="PTHR30408">
    <property type="entry name" value="TYPE-1 RESTRICTION ENZYME ECOKI SPECIFICITY PROTEIN"/>
    <property type="match status" value="1"/>
</dbReference>
<dbReference type="Pfam" id="PF01420">
    <property type="entry name" value="Methylase_S"/>
    <property type="match status" value="2"/>
</dbReference>
<dbReference type="SUPFAM" id="SSF116734">
    <property type="entry name" value="DNA methylase specificity domain"/>
    <property type="match status" value="2"/>
</dbReference>
<sequence>MTPKLKLNNNINWTKRTIDSLFDLKKGEMLEKELITPEGKYEYFNGGVKNSGRTDKFNTFKNTISVIVGGSCGYVRLADKNFFCGQSNCTLNLLDPLELDLKFAYYALKSQQERIEALAFGTTIQNIRISDLKELEIPFTSNKNEQHAIANTLSVFDERLENLASLIEINRKLRDEYAHKLFSLDEAFLSHWKLEALQSQMHEITLGEIFNFKSGKYLKSEERLEEGKFPYYGAGIDNTGFVAEPNTEKDTISIISNGYSLGNIRYHEIPWFNGTGSIALEPMNNEIYVPFFYCALKYLQKDIKERMKSDDSPFLSLKLAGEIKVPYVKSFQLQRKAGKIVFLLDQKLDQYKKELSSLTVIRDTLLKKLFPDMTERTKSIKDY</sequence>